<accession>P0CX83</accession>
<accession>D6VPX3</accession>
<accession>P05735</accession>
<dbReference type="EMBL" id="U16015">
    <property type="protein sequence ID" value="AAB60318.1"/>
    <property type="molecule type" value="Genomic_DNA"/>
</dbReference>
<dbReference type="EMBL" id="D17338">
    <property type="protein sequence ID" value="BAA04156.1"/>
    <property type="molecule type" value="mRNA"/>
</dbReference>
<dbReference type="EMBL" id="X77291">
    <property type="protein sequence ID" value="CAA54504.1"/>
    <property type="status" value="ALT_SEQ"/>
    <property type="molecule type" value="Genomic_DNA"/>
</dbReference>
<dbReference type="EMBL" id="Z35788">
    <property type="protein sequence ID" value="CAA84846.1"/>
    <property type="molecule type" value="Genomic_DNA"/>
</dbReference>
<dbReference type="EMBL" id="BK006936">
    <property type="protein sequence ID" value="DAA07093.1"/>
    <property type="molecule type" value="Genomic_DNA"/>
</dbReference>
<dbReference type="PIR" id="S44597">
    <property type="entry name" value="S44597"/>
</dbReference>
<dbReference type="RefSeq" id="NP_009526.1">
    <property type="nucleotide sequence ID" value="NM_001178267.1"/>
</dbReference>
<dbReference type="PDB" id="4V8T">
    <property type="method" value="EM"/>
    <property type="resolution" value="8.10 A"/>
    <property type="chains" value="R=1-189"/>
</dbReference>
<dbReference type="PDB" id="4V8Y">
    <property type="method" value="EM"/>
    <property type="resolution" value="4.30 A"/>
    <property type="chains" value="BR=2-189"/>
</dbReference>
<dbReference type="PDB" id="4V8Z">
    <property type="method" value="EM"/>
    <property type="resolution" value="6.60 A"/>
    <property type="chains" value="BR=2-189"/>
</dbReference>
<dbReference type="PDBsum" id="4V8T"/>
<dbReference type="PDBsum" id="4V8Y"/>
<dbReference type="PDBsum" id="4V8Z"/>
<dbReference type="SMR" id="P0CX83"/>
<dbReference type="BioGRID" id="32671">
    <property type="interactions" value="404"/>
</dbReference>
<dbReference type="BioGRID" id="32789">
    <property type="interactions" value="256"/>
</dbReference>
<dbReference type="ComplexPortal" id="CPX-1601">
    <property type="entry name" value="60S cytosolic large ribosomal subunit"/>
</dbReference>
<dbReference type="FunCoup" id="P0CX83">
    <property type="interactions" value="1096"/>
</dbReference>
<dbReference type="IntAct" id="P0CX83">
    <property type="interactions" value="86"/>
</dbReference>
<dbReference type="MINT" id="P0CX83"/>
<dbReference type="CarbonylDB" id="P0CX83"/>
<dbReference type="iPTMnet" id="P0CX83"/>
<dbReference type="EnsemblFungi" id="YBL027W_mRNA">
    <property type="protein sequence ID" value="YBL027W"/>
    <property type="gene ID" value="YBL027W"/>
</dbReference>
<dbReference type="EnsemblFungi" id="YBR084C-A_mRNA">
    <property type="protein sequence ID" value="YBR084C-A"/>
    <property type="gene ID" value="YBR084C-A"/>
</dbReference>
<dbReference type="GeneID" id="852254"/>
<dbReference type="KEGG" id="sce:YBL027W"/>
<dbReference type="KEGG" id="sce:YBR084C-A"/>
<dbReference type="AGR" id="SGD:S000000123"/>
<dbReference type="SGD" id="S000000123">
    <property type="gene designation" value="RPL19B"/>
</dbReference>
<dbReference type="VEuPathDB" id="FungiDB:YBL027W"/>
<dbReference type="VEuPathDB" id="FungiDB:YBR084C-A"/>
<dbReference type="GeneTree" id="ENSGT00390000012628"/>
<dbReference type="HOGENOM" id="CLU_083919_0_0_1"/>
<dbReference type="InParanoid" id="P0CX83"/>
<dbReference type="OMA" id="NRVWIDP"/>
<dbReference type="OrthoDB" id="5407653at2759"/>
<dbReference type="BioCyc" id="YEAST:G3O-28930-MONOMER"/>
<dbReference type="Reactome" id="R-SCE-156827">
    <property type="pathway name" value="L13a-mediated translational silencing of Ceruloplasmin expression"/>
</dbReference>
<dbReference type="Reactome" id="R-SCE-1799339">
    <property type="pathway name" value="SRP-dependent cotranslational protein targeting to membrane"/>
</dbReference>
<dbReference type="Reactome" id="R-SCE-72689">
    <property type="pathway name" value="Formation of a pool of free 40S subunits"/>
</dbReference>
<dbReference type="Reactome" id="R-SCE-72706">
    <property type="pathway name" value="GTP hydrolysis and joining of the 60S ribosomal subunit"/>
</dbReference>
<dbReference type="Reactome" id="R-SCE-975956">
    <property type="pathway name" value="Nonsense Mediated Decay (NMD) independent of the Exon Junction Complex (EJC)"/>
</dbReference>
<dbReference type="Reactome" id="R-SCE-975957">
    <property type="pathway name" value="Nonsense Mediated Decay (NMD) enhanced by the Exon Junction Complex (EJC)"/>
</dbReference>
<dbReference type="BioGRID-ORCS" id="852254">
    <property type="hits" value="5 hits in 10 CRISPR screens"/>
</dbReference>
<dbReference type="BioGRID-ORCS" id="852379">
    <property type="hits" value="9 hits in 10 CRISPR screens"/>
</dbReference>
<dbReference type="PRO" id="PR:P0CX83"/>
<dbReference type="Proteomes" id="UP000002311">
    <property type="component" value="Chromosome II"/>
</dbReference>
<dbReference type="RNAct" id="P0CX83">
    <property type="molecule type" value="protein"/>
</dbReference>
<dbReference type="ExpressionAtlas" id="P0CX83">
    <property type="expression patterns" value="baseline and differential"/>
</dbReference>
<dbReference type="GO" id="GO:0005829">
    <property type="term" value="C:cytosol"/>
    <property type="evidence" value="ECO:0000304"/>
    <property type="project" value="Reactome"/>
</dbReference>
<dbReference type="GO" id="GO:0022625">
    <property type="term" value="C:cytosolic large ribosomal subunit"/>
    <property type="evidence" value="ECO:0000314"/>
    <property type="project" value="SGD"/>
</dbReference>
<dbReference type="GO" id="GO:0003723">
    <property type="term" value="F:RNA binding"/>
    <property type="evidence" value="ECO:0000318"/>
    <property type="project" value="GO_Central"/>
</dbReference>
<dbReference type="GO" id="GO:0003735">
    <property type="term" value="F:structural constituent of ribosome"/>
    <property type="evidence" value="ECO:0000318"/>
    <property type="project" value="GO_Central"/>
</dbReference>
<dbReference type="GO" id="GO:0002181">
    <property type="term" value="P:cytoplasmic translation"/>
    <property type="evidence" value="ECO:0000305"/>
    <property type="project" value="SGD"/>
</dbReference>
<dbReference type="CDD" id="cd01417">
    <property type="entry name" value="Ribosomal_L19e_E"/>
    <property type="match status" value="1"/>
</dbReference>
<dbReference type="FunFam" id="1.10.1200.240:FF:000001">
    <property type="entry name" value="Ribosomal protein L19"/>
    <property type="match status" value="1"/>
</dbReference>
<dbReference type="FunFam" id="1.10.1650.10:FF:000001">
    <property type="entry name" value="Ribosomal protein L19"/>
    <property type="match status" value="1"/>
</dbReference>
<dbReference type="Gene3D" id="1.10.1200.240">
    <property type="match status" value="1"/>
</dbReference>
<dbReference type="Gene3D" id="1.10.1650.10">
    <property type="match status" value="1"/>
</dbReference>
<dbReference type="HAMAP" id="MF_01475">
    <property type="entry name" value="Ribosomal_eL19"/>
    <property type="match status" value="1"/>
</dbReference>
<dbReference type="InterPro" id="IPR035970">
    <property type="entry name" value="60S_ribosomal_eL19_sf"/>
</dbReference>
<dbReference type="InterPro" id="IPR039547">
    <property type="entry name" value="Ribosomal_eL19"/>
</dbReference>
<dbReference type="InterPro" id="IPR023638">
    <property type="entry name" value="Ribosomal_eL19_CS"/>
</dbReference>
<dbReference type="InterPro" id="IPR000196">
    <property type="entry name" value="Ribosomal_eL19_dom"/>
</dbReference>
<dbReference type="InterPro" id="IPR015972">
    <property type="entry name" value="Ribosomal_eL19_dom1"/>
</dbReference>
<dbReference type="InterPro" id="IPR033935">
    <property type="entry name" value="Ribosomal_eL19_euk"/>
</dbReference>
<dbReference type="NCBIfam" id="NF006343">
    <property type="entry name" value="PRK08570.1"/>
    <property type="match status" value="1"/>
</dbReference>
<dbReference type="PANTHER" id="PTHR10722">
    <property type="entry name" value="60S RIBOSOMAL PROTEIN L19"/>
    <property type="match status" value="1"/>
</dbReference>
<dbReference type="Pfam" id="PF01280">
    <property type="entry name" value="Ribosomal_L19e"/>
    <property type="match status" value="1"/>
</dbReference>
<dbReference type="Pfam" id="PF25476">
    <property type="entry name" value="Ribosomal_L19e_C"/>
    <property type="match status" value="1"/>
</dbReference>
<dbReference type="SMART" id="SM01416">
    <property type="entry name" value="Ribosomal_L19e"/>
    <property type="match status" value="1"/>
</dbReference>
<dbReference type="SUPFAM" id="SSF48140">
    <property type="entry name" value="Ribosomal protein L19 (L19e)"/>
    <property type="match status" value="1"/>
</dbReference>
<dbReference type="PROSITE" id="PS00526">
    <property type="entry name" value="RIBOSOMAL_L19E"/>
    <property type="match status" value="1"/>
</dbReference>
<sequence>MANLRTQKRLAASVVGVGKRKVWLDPNETSEIAQANSRNAIRKLVKNGTIVKKAVTVHSKSRTRAHAQSKREGRHSGYGKRKGTREARLPSQVVWIRRLRVLRRLLAKYRDAGKIDKHLYHVLYKESKGNAFKHKRALVEHIIQAKADAQREKALNEEAEARRLKNRAARDRRAQRVAEKRDALLKEDA</sequence>
<proteinExistence type="evidence at protein level"/>
<gene>
    <name evidence="9" type="primary">RPL19B</name>
    <name type="synonym">RPL23B</name>
    <name type="synonym">YL14B</name>
    <name type="ordered locus">YBL027W</name>
    <name type="ORF">YBL0424</name>
</gene>
<comment type="function">
    <text evidence="11">Component of the ribosome, a large ribonucleoprotein complex responsible for the synthesis of proteins in the cell. The small ribosomal subunit (SSU) binds messenger RNAs (mRNAs) and translates the encoded message by selecting cognate aminoacyl-transfer RNA (tRNA) molecules. The large subunit (LSU) contains the ribosomal catalytic site termed the peptidyl transferase center (PTC), which catalyzes the formation of peptide bonds, thereby polymerizing the amino acids delivered by tRNAs into a polypeptide chain. The nascent polypeptides leave the ribosome through a tunnel in the LSU and interact with protein factors that function in enzymatic processing, targeting, and the membrane insertion of nascent chains at the exit of the ribosomal tunnel. eL19 may play a role in the last stages of translation initiation, in particular subunit joining and shedding/releasing factors.</text>
</comment>
<comment type="subunit">
    <text evidence="6 12">Component of the large ribosomal subunit (LSU). Mature yeast ribosomes consist of a small (40S) and a large (60S) subunit. The 40S small subunit contains 1 molecule of ribosomal RNA (18S rRNA) and 33 different proteins (encoded by 57 genes). The large 60S subunit contains 3 rRNA molecules (25S, 5.8S and 5S rRNA) and 46 different proteins (encoded by 81 genes). eL19 lies in close proximity to the binding site for eukaryotic initiation factor eIF4G (PubMed:22096102, PubMed:9559554).</text>
</comment>
<comment type="subcellular location">
    <subcellularLocation>
        <location evidence="3 6">Cytoplasm</location>
    </subcellularLocation>
</comment>
<comment type="mass spectrometry">
    <text>Average mass.</text>
</comment>
<comment type="miscellaneous">
    <text evidence="4">Present with 225000 molecules/cell in log phase SD medium.</text>
</comment>
<comment type="miscellaneous">
    <text evidence="10">There are 2 genes for eL19 in yeast.</text>
</comment>
<comment type="similarity">
    <text evidence="10">Belongs to the eukaryotic ribosomal protein eL19 family.</text>
</comment>
<comment type="sequence caution" evidence="10">
    <conflict type="erroneous gene model prediction">
        <sequence resource="EMBL-CDS" id="CAA54504"/>
    </conflict>
</comment>
<reference key="1">
    <citation type="journal article" date="1996" name="Curr. Genet.">
        <title>Organization and characterization of the two yeast ribosomal protein YL19 genes.</title>
        <authorList>
            <person name="Song J.M."/>
            <person name="Cheung E."/>
            <person name="Rabinowitz J.C."/>
        </authorList>
    </citation>
    <scope>NUCLEOTIDE SEQUENCE [GENOMIC DNA]</scope>
    <source>
        <strain>S288c / GRF88</strain>
    </source>
</reference>
<reference key="2">
    <citation type="submission" date="1993-07" db="EMBL/GenBank/DDBJ databases">
        <authorList>
            <person name="Suzuki K."/>
            <person name="Tomiyoshi A."/>
            <person name="Otaka E."/>
        </authorList>
    </citation>
    <scope>NUCLEOTIDE SEQUENCE [MRNA]</scope>
    <source>
        <strain>ATCC 204508 / S288c</strain>
    </source>
</reference>
<reference key="3">
    <citation type="journal article" date="1994" name="Yeast">
        <title>Analysis of a 17.4 kb DNA segment of yeast chromosome II encompassing the ribosomal protein L19 as well as proteins with homologies to components of the hnRNP and snRNP complexes and to the human proliferation-associated p120 antigen.</title>
        <authorList>
            <person name="van Dyck L."/>
            <person name="Jonniaux J.-L."/>
            <person name="Barreiros T.D.M."/>
            <person name="Kleine K."/>
            <person name="Goffeau A."/>
        </authorList>
    </citation>
    <scope>NUCLEOTIDE SEQUENCE [GENOMIC DNA]</scope>
    <source>
        <strain>ATCC 204508 / S288c</strain>
    </source>
</reference>
<reference key="4">
    <citation type="journal article" date="1994" name="EMBO J.">
        <title>Complete DNA sequence of yeast chromosome II.</title>
        <authorList>
            <person name="Feldmann H."/>
            <person name="Aigle M."/>
            <person name="Aljinovic G."/>
            <person name="Andre B."/>
            <person name="Baclet M.C."/>
            <person name="Barthe C."/>
            <person name="Baur A."/>
            <person name="Becam A.-M."/>
            <person name="Biteau N."/>
            <person name="Boles E."/>
            <person name="Brandt T."/>
            <person name="Brendel M."/>
            <person name="Brueckner M."/>
            <person name="Bussereau F."/>
            <person name="Christiansen C."/>
            <person name="Contreras R."/>
            <person name="Crouzet M."/>
            <person name="Cziepluch C."/>
            <person name="Demolis N."/>
            <person name="Delaveau T."/>
            <person name="Doignon F."/>
            <person name="Domdey H."/>
            <person name="Duesterhus S."/>
            <person name="Dubois E."/>
            <person name="Dujon B."/>
            <person name="El Bakkoury M."/>
            <person name="Entian K.-D."/>
            <person name="Feuermann M."/>
            <person name="Fiers W."/>
            <person name="Fobo G.M."/>
            <person name="Fritz C."/>
            <person name="Gassenhuber J."/>
            <person name="Glansdorff N."/>
            <person name="Goffeau A."/>
            <person name="Grivell L.A."/>
            <person name="de Haan M."/>
            <person name="Hein C."/>
            <person name="Herbert C.J."/>
            <person name="Hollenberg C.P."/>
            <person name="Holmstroem K."/>
            <person name="Jacq C."/>
            <person name="Jacquet M."/>
            <person name="Jauniaux J.-C."/>
            <person name="Jonniaux J.-L."/>
            <person name="Kallesoee T."/>
            <person name="Kiesau P."/>
            <person name="Kirchrath L."/>
            <person name="Koetter P."/>
            <person name="Korol S."/>
            <person name="Liebl S."/>
            <person name="Logghe M."/>
            <person name="Lohan A.J.E."/>
            <person name="Louis E.J."/>
            <person name="Li Z.Y."/>
            <person name="Maat M.J."/>
            <person name="Mallet L."/>
            <person name="Mannhaupt G."/>
            <person name="Messenguy F."/>
            <person name="Miosga T."/>
            <person name="Molemans F."/>
            <person name="Mueller S."/>
            <person name="Nasr F."/>
            <person name="Obermaier B."/>
            <person name="Perea J."/>
            <person name="Pierard A."/>
            <person name="Piravandi E."/>
            <person name="Pohl F.M."/>
            <person name="Pohl T.M."/>
            <person name="Potier S."/>
            <person name="Proft M."/>
            <person name="Purnelle B."/>
            <person name="Ramezani Rad M."/>
            <person name="Rieger M."/>
            <person name="Rose M."/>
            <person name="Schaaff-Gerstenschlaeger I."/>
            <person name="Scherens B."/>
            <person name="Schwarzlose C."/>
            <person name="Skala J."/>
            <person name="Slonimski P.P."/>
            <person name="Smits P.H.M."/>
            <person name="Souciet J.-L."/>
            <person name="Steensma H.Y."/>
            <person name="Stucka R."/>
            <person name="Urrestarazu L.A."/>
            <person name="van der Aart Q.J.M."/>
            <person name="Van Dyck L."/>
            <person name="Vassarotti A."/>
            <person name="Vetter I."/>
            <person name="Vierendeels F."/>
            <person name="Vissers S."/>
            <person name="Wagner G."/>
            <person name="de Wergifosse P."/>
            <person name="Wolfe K.H."/>
            <person name="Zagulski M."/>
            <person name="Zimmermann F.K."/>
            <person name="Mewes H.-W."/>
            <person name="Kleine K."/>
        </authorList>
    </citation>
    <scope>NUCLEOTIDE SEQUENCE [LARGE SCALE GENOMIC DNA]</scope>
    <source>
        <strain>ATCC 204508 / S288c</strain>
    </source>
</reference>
<reference key="5">
    <citation type="journal article" date="2014" name="G3 (Bethesda)">
        <title>The reference genome sequence of Saccharomyces cerevisiae: Then and now.</title>
        <authorList>
            <person name="Engel S.R."/>
            <person name="Dietrich F.S."/>
            <person name="Fisk D.G."/>
            <person name="Binkley G."/>
            <person name="Balakrishnan R."/>
            <person name="Costanzo M.C."/>
            <person name="Dwight S.S."/>
            <person name="Hitz B.C."/>
            <person name="Karra K."/>
            <person name="Nash R.S."/>
            <person name="Weng S."/>
            <person name="Wong E.D."/>
            <person name="Lloyd P."/>
            <person name="Skrzypek M.S."/>
            <person name="Miyasato S.R."/>
            <person name="Simison M."/>
            <person name="Cherry J.M."/>
        </authorList>
    </citation>
    <scope>GENOME REANNOTATION</scope>
    <source>
        <strain>ATCC 204508 / S288c</strain>
    </source>
</reference>
<reference key="6">
    <citation type="journal article" date="1983" name="Mol. Gen. Genet.">
        <title>Yeast ribosomal proteins: VII. Cytoplasmic ribosomal proteins from Schizosaccharomyces pombe.</title>
        <authorList>
            <person name="Otaka E."/>
            <person name="Higo K."/>
            <person name="Itoh T."/>
        </authorList>
    </citation>
    <scope>PROTEIN SEQUENCE OF 2-31</scope>
</reference>
<reference key="7">
    <citation type="journal article" date="1992" name="J. Biol. Chem.">
        <title>NH2-terminal acetylation of ribosomal proteins of Saccharomyces cerevisiae.</title>
        <authorList>
            <person name="Takakura H."/>
            <person name="Tsunasawa S."/>
            <person name="Miyagi M."/>
            <person name="Warner J.R."/>
        </authorList>
    </citation>
    <scope>PROTEIN SEQUENCE OF 2-21</scope>
</reference>
<reference key="8">
    <citation type="journal article" date="1993" name="Nat. Genet.">
        <title>Identification of protein coding regions by database similarity search.</title>
        <authorList>
            <person name="Gish W."/>
            <person name="States D.J."/>
        </authorList>
    </citation>
    <scope>IDENTIFICATION</scope>
</reference>
<reference key="9">
    <citation type="journal article" date="1998" name="Yeast">
        <title>The list of cytoplasmic ribosomal proteins of Saccharomyces cerevisiae.</title>
        <authorList>
            <person name="Planta R.J."/>
            <person name="Mager W.H."/>
        </authorList>
    </citation>
    <scope>NOMENCLATURE</scope>
    <scope>SUBUNIT</scope>
</reference>
<reference key="10">
    <citation type="journal article" date="2002" name="Proc. Natl. Acad. Sci. U.S.A.">
        <title>Direct mass spectrometric analysis of intact proteins of the yeast large ribosomal subunit using capillary LC/FTICR.</title>
        <authorList>
            <person name="Lee S.-W."/>
            <person name="Berger S.J."/>
            <person name="Martinovic S."/>
            <person name="Pasa-Tolic L."/>
            <person name="Anderson G.A."/>
            <person name="Shen Y."/>
            <person name="Zhao R."/>
            <person name="Smith R.D."/>
        </authorList>
    </citation>
    <scope>MASS SPECTROMETRY</scope>
</reference>
<reference key="11">
    <citation type="journal article" date="2003" name="Nature">
        <title>Global analysis of protein localization in budding yeast.</title>
        <authorList>
            <person name="Huh W.-K."/>
            <person name="Falvo J.V."/>
            <person name="Gerke L.C."/>
            <person name="Carroll A.S."/>
            <person name="Howson R.W."/>
            <person name="Weissman J.S."/>
            <person name="O'Shea E.K."/>
        </authorList>
    </citation>
    <scope>SUBCELLULAR LOCATION [LARGE SCALE ANALYSIS]</scope>
</reference>
<reference key="12">
    <citation type="journal article" date="2003" name="Nature">
        <title>Global analysis of protein expression in yeast.</title>
        <authorList>
            <person name="Ghaemmaghami S."/>
            <person name="Huh W.-K."/>
            <person name="Bower K."/>
            <person name="Howson R.W."/>
            <person name="Belle A."/>
            <person name="Dephoure N."/>
            <person name="O'Shea E.K."/>
            <person name="Weissman J.S."/>
        </authorList>
    </citation>
    <scope>LEVEL OF PROTEIN EXPRESSION [LARGE SCALE ANALYSIS]</scope>
</reference>
<reference key="13">
    <citation type="journal article" date="2007" name="J. Proteome Res.">
        <title>Large-scale phosphorylation analysis of alpha-factor-arrested Saccharomyces cerevisiae.</title>
        <authorList>
            <person name="Li X."/>
            <person name="Gerber S.A."/>
            <person name="Rudner A.D."/>
            <person name="Beausoleil S.A."/>
            <person name="Haas W."/>
            <person name="Villen J."/>
            <person name="Elias J.E."/>
            <person name="Gygi S.P."/>
        </authorList>
    </citation>
    <scope>IDENTIFICATION BY MASS SPECTROMETRY [LARGE SCALE ANALYSIS]</scope>
    <source>
        <strain>ADR376</strain>
    </source>
</reference>
<reference key="14">
    <citation type="journal article" date="2008" name="Mol. Cell. Proteomics">
        <title>A multidimensional chromatography technology for in-depth phosphoproteome analysis.</title>
        <authorList>
            <person name="Albuquerque C.P."/>
            <person name="Smolka M.B."/>
            <person name="Payne S.H."/>
            <person name="Bafna V."/>
            <person name="Eng J."/>
            <person name="Zhou H."/>
        </authorList>
    </citation>
    <scope>IDENTIFICATION BY MASS SPECTROMETRY [LARGE SCALE ANALYSIS]</scope>
</reference>
<reference key="15">
    <citation type="journal article" date="2009" name="Science">
        <title>Global analysis of Cdk1 substrate phosphorylation sites provides insights into evolution.</title>
        <authorList>
            <person name="Holt L.J."/>
            <person name="Tuch B.B."/>
            <person name="Villen J."/>
            <person name="Johnson A.D."/>
            <person name="Gygi S.P."/>
            <person name="Morgan D.O."/>
        </authorList>
    </citation>
    <scope>PHOSPHORYLATION [LARGE SCALE ANALYSIS] AT SER-30; SER-37 AND SER-91</scope>
    <scope>IDENTIFICATION BY MASS SPECTROMETRY [LARGE SCALE ANALYSIS]</scope>
</reference>
<reference key="16">
    <citation type="journal article" date="2011" name="Science">
        <title>The structure of the eukaryotic ribosome at 3.0 A resolution.</title>
        <authorList>
            <person name="Ben-Shem A."/>
            <person name="Garreau de Loubresse N."/>
            <person name="Melnikov S."/>
            <person name="Jenner L."/>
            <person name="Yusupova G."/>
            <person name="Yusupov M."/>
        </authorList>
    </citation>
    <scope>SUBUNIT</scope>
    <scope>SUBCELLULAR LOCATION</scope>
</reference>
<reference key="17">
    <citation type="journal article" date="2012" name="Proteomics">
        <title>Sites of ubiquitin attachment in Saccharomyces cerevisiae.</title>
        <authorList>
            <person name="Starita L.M."/>
            <person name="Lo R.S."/>
            <person name="Eng J.K."/>
            <person name="von Haller P.D."/>
            <person name="Fields S."/>
        </authorList>
    </citation>
    <scope>UBIQUITINATION [LARGE SCALE ANALYSIS] AT LYS-21; LYS-53; LYS-60; LYS-146 AND LYS-186</scope>
    <scope>IDENTIFICATION BY MASS SPECTROMETRY [LARGE SCALE ANALYSIS]</scope>
</reference>
<reference key="18">
    <citation type="journal article" date="2014" name="Curr. Opin. Struct. Biol.">
        <title>A new system for naming ribosomal proteins.</title>
        <authorList>
            <person name="Ban N."/>
            <person name="Beckmann R."/>
            <person name="Cate J.H.D."/>
            <person name="Dinman J.D."/>
            <person name="Dragon F."/>
            <person name="Ellis S.R."/>
            <person name="Lafontaine D.L.J."/>
            <person name="Lindahl L."/>
            <person name="Liljas A."/>
            <person name="Lipton J.M."/>
            <person name="McAlear M.A."/>
            <person name="Moore P.B."/>
            <person name="Noller H.F."/>
            <person name="Ortega J."/>
            <person name="Panse V.G."/>
            <person name="Ramakrishnan V."/>
            <person name="Spahn C.M.T."/>
            <person name="Steitz T.A."/>
            <person name="Tchorzewski M."/>
            <person name="Tollervey D."/>
            <person name="Warren A.J."/>
            <person name="Williamson J.R."/>
            <person name="Wilson D."/>
            <person name="Yonath A."/>
            <person name="Yusupov M."/>
        </authorList>
    </citation>
    <scope>NOMENCLATURE</scope>
</reference>
<evidence type="ECO:0000256" key="1">
    <source>
        <dbReference type="SAM" id="MobiDB-lite"/>
    </source>
</evidence>
<evidence type="ECO:0000269" key="2">
    <source>
    </source>
</evidence>
<evidence type="ECO:0000269" key="3">
    <source>
    </source>
</evidence>
<evidence type="ECO:0000269" key="4">
    <source>
    </source>
</evidence>
<evidence type="ECO:0000269" key="5">
    <source>
    </source>
</evidence>
<evidence type="ECO:0000269" key="6">
    <source>
    </source>
</evidence>
<evidence type="ECO:0000269" key="7">
    <source>
    </source>
</evidence>
<evidence type="ECO:0000303" key="8">
    <source>
    </source>
</evidence>
<evidence type="ECO:0000303" key="9">
    <source>
    </source>
</evidence>
<evidence type="ECO:0000305" key="10"/>
<evidence type="ECO:0000305" key="11">
    <source>
    </source>
</evidence>
<evidence type="ECO:0000305" key="12">
    <source>
    </source>
</evidence>
<evidence type="ECO:0007744" key="13">
    <source>
    </source>
</evidence>
<evidence type="ECO:0007744" key="14">
    <source>
    </source>
</evidence>
<keyword id="KW-0002">3D-structure</keyword>
<keyword id="KW-0963">Cytoplasm</keyword>
<keyword id="KW-0903">Direct protein sequencing</keyword>
<keyword id="KW-1017">Isopeptide bond</keyword>
<keyword id="KW-0597">Phosphoprotein</keyword>
<keyword id="KW-1185">Reference proteome</keyword>
<keyword id="KW-0687">Ribonucleoprotein</keyword>
<keyword id="KW-0689">Ribosomal protein</keyword>
<keyword id="KW-0832">Ubl conjugation</keyword>
<feature type="initiator methionine" description="Removed" evidence="5 7">
    <location>
        <position position="1"/>
    </location>
</feature>
<feature type="chain" id="PRO_0000410446" description="Large ribosomal subunit protein eL19">
    <location>
        <begin position="2"/>
        <end position="189"/>
    </location>
</feature>
<feature type="region of interest" description="Disordered" evidence="1">
    <location>
        <begin position="58"/>
        <end position="85"/>
    </location>
</feature>
<feature type="region of interest" description="Disordered" evidence="1">
    <location>
        <begin position="164"/>
        <end position="189"/>
    </location>
</feature>
<feature type="compositionally biased region" description="Basic residues" evidence="1">
    <location>
        <begin position="59"/>
        <end position="68"/>
    </location>
</feature>
<feature type="modified residue" description="Phosphoserine" evidence="13">
    <location>
        <position position="30"/>
    </location>
</feature>
<feature type="modified residue" description="Phosphoserine" evidence="13">
    <location>
        <position position="37"/>
    </location>
</feature>
<feature type="modified residue" description="Phosphoserine" evidence="13">
    <location>
        <position position="91"/>
    </location>
</feature>
<feature type="cross-link" description="Glycyl lysine isopeptide (Lys-Gly) (interchain with G-Cter in ubiquitin)" evidence="14">
    <location>
        <position position="21"/>
    </location>
</feature>
<feature type="cross-link" description="Glycyl lysine isopeptide (Lys-Gly) (interchain with G-Cter in ubiquitin)" evidence="14">
    <location>
        <position position="53"/>
    </location>
</feature>
<feature type="cross-link" description="Glycyl lysine isopeptide (Lys-Gly) (interchain with G-Cter in ubiquitin)" evidence="14">
    <location>
        <position position="60"/>
    </location>
</feature>
<feature type="cross-link" description="Glycyl lysine isopeptide (Lys-Gly) (interchain with G-Cter in ubiquitin)" evidence="14">
    <location>
        <position position="146"/>
    </location>
</feature>
<feature type="cross-link" description="Glycyl lysine isopeptide (Lys-Gly) (interchain with G-Cter in ubiquitin)" evidence="14">
    <location>
        <position position="186"/>
    </location>
</feature>
<organism>
    <name type="scientific">Saccharomyces cerevisiae (strain ATCC 204508 / S288c)</name>
    <name type="common">Baker's yeast</name>
    <dbReference type="NCBI Taxonomy" id="559292"/>
    <lineage>
        <taxon>Eukaryota</taxon>
        <taxon>Fungi</taxon>
        <taxon>Dikarya</taxon>
        <taxon>Ascomycota</taxon>
        <taxon>Saccharomycotina</taxon>
        <taxon>Saccharomycetes</taxon>
        <taxon>Saccharomycetales</taxon>
        <taxon>Saccharomycetaceae</taxon>
        <taxon>Saccharomyces</taxon>
    </lineage>
</organism>
<protein>
    <recommendedName>
        <fullName evidence="8">Large ribosomal subunit protein eL19</fullName>
    </recommendedName>
    <alternativeName>
        <fullName evidence="9">60S ribosomal protein L19-B</fullName>
    </alternativeName>
    <alternativeName>
        <fullName>L23</fullName>
    </alternativeName>
    <alternativeName>
        <fullName>RP15L</fullName>
    </alternativeName>
    <alternativeName>
        <fullName>RP33</fullName>
    </alternativeName>
    <alternativeName>
        <fullName>YL14</fullName>
    </alternativeName>
</protein>
<name>RL19B_YEAST</name>